<accession>P11175</accession>
<sequence>MTKTLPEDFIFGGATAAYQAEGATNTDGKGRVAWDTYLEENYWYTAEPASDFYNRYPVDLELSEKFGVNGIRISIAWSRIFPNGYGEVNPKGVEYYHKLFAECHKRHVEPFVTLHHFDTPEVLHKDGDFLNRKTIDYFVDYAEYCFKEFPEVKYWTTFNEIGPIGDGQYLVGKFPPGIKYDFEKVFQSHHNMMVAHARAVKLFKDGGYKGEIGVVHALPTKYPFDPSNPEDVRAAELEDIIHNKFILDATYLGKYSRETMEGVQHILSVNGGKLNITDEDYAILDAAKDLNDFLGINYYMSDWMRGYDGESEITHNATGDKGGSKYQLKGVGQREFDVDVPRTDWDWMIYPQGLYDQIMRVVKDYPNYHKIYITENGLGYKDEFIESEKTVHDDARIDYVRQHLNVIADAIIDGANVKGYFIWSLMDVFSWSNGYEKRYGLFYVDFETQERYPKKSAYWYKELAETKEIK</sequence>
<evidence type="ECO:0000255" key="1">
    <source>
        <dbReference type="HAMAP-Rule" id="MF_01574"/>
    </source>
</evidence>
<evidence type="ECO:0000269" key="2">
    <source>
    </source>
</evidence>
<keyword id="KW-0326">Glycosidase</keyword>
<keyword id="KW-0378">Hydrolase</keyword>
<feature type="chain" id="PRO_0000063890" description="6-phospho-beta-galactosidase">
    <location>
        <begin position="1"/>
        <end position="470"/>
    </location>
</feature>
<feature type="active site" description="Proton donor" evidence="1">
    <location>
        <position position="160"/>
    </location>
</feature>
<feature type="active site" description="Nucleophile" evidence="1 2">
    <location>
        <position position="375"/>
    </location>
</feature>
<feature type="binding site" evidence="1">
    <location>
        <position position="19"/>
    </location>
    <ligand>
        <name>D-galactose 6-phosphate</name>
        <dbReference type="ChEBI" id="CHEBI:91004"/>
    </ligand>
</feature>
<feature type="binding site" evidence="1">
    <location>
        <position position="116"/>
    </location>
    <ligand>
        <name>D-galactose 6-phosphate</name>
        <dbReference type="ChEBI" id="CHEBI:91004"/>
    </ligand>
</feature>
<feature type="binding site" evidence="1">
    <location>
        <position position="159"/>
    </location>
    <ligand>
        <name>D-galactose 6-phosphate</name>
        <dbReference type="ChEBI" id="CHEBI:91004"/>
    </ligand>
</feature>
<feature type="binding site" evidence="1">
    <location>
        <position position="160"/>
    </location>
    <ligand>
        <name>D-galactose 6-phosphate</name>
        <dbReference type="ChEBI" id="CHEBI:91004"/>
    </ligand>
</feature>
<feature type="binding site" evidence="1">
    <location>
        <position position="297"/>
    </location>
    <ligand>
        <name>D-galactose 6-phosphate</name>
        <dbReference type="ChEBI" id="CHEBI:91004"/>
    </ligand>
</feature>
<feature type="binding site" evidence="1">
    <location>
        <position position="430"/>
    </location>
    <ligand>
        <name>D-galactose 6-phosphate</name>
        <dbReference type="ChEBI" id="CHEBI:91004"/>
    </ligand>
</feature>
<feature type="binding site" evidence="1">
    <location>
        <position position="431"/>
    </location>
    <ligand>
        <name>D-galactose 6-phosphate</name>
        <dbReference type="ChEBI" id="CHEBI:91004"/>
    </ligand>
</feature>
<feature type="binding site" evidence="1">
    <location>
        <position position="437"/>
    </location>
    <ligand>
        <name>D-galactose 6-phosphate</name>
        <dbReference type="ChEBI" id="CHEBI:91004"/>
    </ligand>
</feature>
<feature type="binding site" evidence="1">
    <location>
        <position position="439"/>
    </location>
    <ligand>
        <name>D-galactose 6-phosphate</name>
        <dbReference type="ChEBI" id="CHEBI:91004"/>
    </ligand>
</feature>
<proteinExistence type="inferred from homology"/>
<comment type="catalytic activity">
    <reaction evidence="1">
        <text>a 6-phospho-beta-D-galactoside + H2O = D-galactose 6-phosphate + an alcohol</text>
        <dbReference type="Rhea" id="RHEA:24568"/>
        <dbReference type="ChEBI" id="CHEBI:15377"/>
        <dbReference type="ChEBI" id="CHEBI:30879"/>
        <dbReference type="ChEBI" id="CHEBI:58534"/>
        <dbReference type="ChEBI" id="CHEBI:91004"/>
        <dbReference type="EC" id="3.2.1.85"/>
    </reaction>
</comment>
<comment type="pathway">
    <text evidence="1">Carbohydrate metabolism; lactose degradation; D-galactose 6-phosphate and beta-D-glucose from lactose 6-phosphate: step 1/1.</text>
</comment>
<comment type="similarity">
    <text evidence="1">Belongs to the glycosyl hydrolase 1 family.</text>
</comment>
<name>LACG_STAAU</name>
<dbReference type="EC" id="3.2.1.85" evidence="1"/>
<dbReference type="EMBL" id="J03479">
    <property type="protein sequence ID" value="AAA26650.1"/>
    <property type="molecule type" value="Genomic_DNA"/>
</dbReference>
<dbReference type="PIR" id="A27233">
    <property type="entry name" value="A27233"/>
</dbReference>
<dbReference type="RefSeq" id="WP_000169220.1">
    <property type="nucleotide sequence ID" value="NZ_WWFR01000005.1"/>
</dbReference>
<dbReference type="SMR" id="P11175"/>
<dbReference type="CAZy" id="GH1">
    <property type="family name" value="Glycoside Hydrolase Family 1"/>
</dbReference>
<dbReference type="OMA" id="YQIEGHG"/>
<dbReference type="BioCyc" id="MetaCyc:MONOMER-2746"/>
<dbReference type="SABIO-RK" id="P11175"/>
<dbReference type="UniPathway" id="UPA00542">
    <property type="reaction ID" value="UER00605"/>
</dbReference>
<dbReference type="GO" id="GO:0005829">
    <property type="term" value="C:cytosol"/>
    <property type="evidence" value="ECO:0007669"/>
    <property type="project" value="TreeGrafter"/>
</dbReference>
<dbReference type="GO" id="GO:0033920">
    <property type="term" value="F:6-phospho-beta-galactosidase activity"/>
    <property type="evidence" value="ECO:0007669"/>
    <property type="project" value="UniProtKB-UniRule"/>
</dbReference>
<dbReference type="GO" id="GO:0008422">
    <property type="term" value="F:beta-glucosidase activity"/>
    <property type="evidence" value="ECO:0007669"/>
    <property type="project" value="TreeGrafter"/>
</dbReference>
<dbReference type="GO" id="GO:0019512">
    <property type="term" value="P:lactose catabolic process via tagatose-6-phosphate"/>
    <property type="evidence" value="ECO:0007669"/>
    <property type="project" value="InterPro"/>
</dbReference>
<dbReference type="FunFam" id="3.20.20.80:FF:000004">
    <property type="entry name" value="Beta-glucosidase 6-phospho-beta-glucosidase"/>
    <property type="match status" value="1"/>
</dbReference>
<dbReference type="Gene3D" id="3.20.20.80">
    <property type="entry name" value="Glycosidases"/>
    <property type="match status" value="1"/>
</dbReference>
<dbReference type="HAMAP" id="MF_01574">
    <property type="entry name" value="LacG"/>
    <property type="match status" value="1"/>
</dbReference>
<dbReference type="InterPro" id="IPR005928">
    <property type="entry name" value="6P-beta-galactosidase"/>
</dbReference>
<dbReference type="InterPro" id="IPR001360">
    <property type="entry name" value="Glyco_hydro_1"/>
</dbReference>
<dbReference type="InterPro" id="IPR018120">
    <property type="entry name" value="Glyco_hydro_1_AS"/>
</dbReference>
<dbReference type="InterPro" id="IPR033132">
    <property type="entry name" value="Glyco_hydro_1_N_CS"/>
</dbReference>
<dbReference type="InterPro" id="IPR017853">
    <property type="entry name" value="Glycoside_hydrolase_SF"/>
</dbReference>
<dbReference type="NCBIfam" id="TIGR01233">
    <property type="entry name" value="lacG"/>
    <property type="match status" value="1"/>
</dbReference>
<dbReference type="NCBIfam" id="NF010036">
    <property type="entry name" value="PRK13511.1"/>
    <property type="match status" value="1"/>
</dbReference>
<dbReference type="PANTHER" id="PTHR10353">
    <property type="entry name" value="GLYCOSYL HYDROLASE"/>
    <property type="match status" value="1"/>
</dbReference>
<dbReference type="PANTHER" id="PTHR10353:SF36">
    <property type="entry name" value="LP05116P"/>
    <property type="match status" value="1"/>
</dbReference>
<dbReference type="Pfam" id="PF00232">
    <property type="entry name" value="Glyco_hydro_1"/>
    <property type="match status" value="1"/>
</dbReference>
<dbReference type="PRINTS" id="PR00131">
    <property type="entry name" value="GLHYDRLASE1"/>
</dbReference>
<dbReference type="SUPFAM" id="SSF51445">
    <property type="entry name" value="(Trans)glycosidases"/>
    <property type="match status" value="1"/>
</dbReference>
<dbReference type="PROSITE" id="PS00572">
    <property type="entry name" value="GLYCOSYL_HYDROL_F1_1"/>
    <property type="match status" value="1"/>
</dbReference>
<dbReference type="PROSITE" id="PS00653">
    <property type="entry name" value="GLYCOSYL_HYDROL_F1_2"/>
    <property type="match status" value="1"/>
</dbReference>
<gene>
    <name evidence="1" type="primary">lacG</name>
</gene>
<protein>
    <recommendedName>
        <fullName evidence="1">6-phospho-beta-galactosidase</fullName>
        <ecNumber evidence="1">3.2.1.85</ecNumber>
    </recommendedName>
    <alternativeName>
        <fullName evidence="1">Beta-D-phosphogalactoside galactohydrolase</fullName>
        <shortName evidence="1">PGALase</shortName>
    </alternativeName>
    <alternativeName>
        <fullName evidence="1">P-beta-Gal</fullName>
        <shortName evidence="1">PBG</shortName>
    </alternativeName>
</protein>
<organism>
    <name type="scientific">Staphylococcus aureus</name>
    <dbReference type="NCBI Taxonomy" id="1280"/>
    <lineage>
        <taxon>Bacteria</taxon>
        <taxon>Bacillati</taxon>
        <taxon>Bacillota</taxon>
        <taxon>Bacilli</taxon>
        <taxon>Bacillales</taxon>
        <taxon>Staphylococcaceae</taxon>
        <taxon>Staphylococcus</taxon>
    </lineage>
</organism>
<reference key="1">
    <citation type="journal article" date="1987" name="Appl. Environ. Microbiol.">
        <title>Nucleotide and deduced amino acid sequences of the Staphylococcus aureus phospho-beta-galactosidase gene.</title>
        <authorList>
            <person name="Breidt F. Jr."/>
            <person name="Stewart G.C."/>
        </authorList>
    </citation>
    <scope>NUCLEOTIDE SEQUENCE [GENOMIC DNA]</scope>
</reference>
<reference key="2">
    <citation type="journal article" date="1995" name="Eur. J. Biochem.">
        <title>Identification of the active-site nucleophile in 6-phospho-beta-galactosidase from Staphylococcus aureus by labelling with synthetic inhibitors.</title>
        <authorList>
            <person name="Staedtler P."/>
            <person name="Hoenig S."/>
            <person name="Frank R."/>
            <person name="Withers S.G."/>
            <person name="Hengstenberg W."/>
        </authorList>
    </citation>
    <scope>ACTIVE SITE GLU-375</scope>
</reference>